<name>Y359_METJA</name>
<dbReference type="EMBL" id="L77117">
    <property type="protein sequence ID" value="AAB98351.1"/>
    <property type="molecule type" value="Genomic_DNA"/>
</dbReference>
<dbReference type="PIR" id="G64344">
    <property type="entry name" value="G64344"/>
</dbReference>
<dbReference type="RefSeq" id="WP_010869858.1">
    <property type="nucleotide sequence ID" value="NC_000909.1"/>
</dbReference>
<dbReference type="STRING" id="243232.MJ_0359"/>
<dbReference type="PaxDb" id="243232-MJ_0359"/>
<dbReference type="DNASU" id="1451216"/>
<dbReference type="EnsemblBacteria" id="AAB98351">
    <property type="protein sequence ID" value="AAB98351"/>
    <property type="gene ID" value="MJ_0359"/>
</dbReference>
<dbReference type="GeneID" id="1451216"/>
<dbReference type="KEGG" id="mja:MJ_0359"/>
<dbReference type="HOGENOM" id="CLU_1324811_0_0_2"/>
<dbReference type="InParanoid" id="Q57805"/>
<dbReference type="OrthoDB" id="387294at2157"/>
<dbReference type="Proteomes" id="UP000000805">
    <property type="component" value="Chromosome"/>
</dbReference>
<dbReference type="Gene3D" id="3.90.175.10">
    <property type="entry name" value="Diphtheria Toxin, domain 1"/>
    <property type="match status" value="1"/>
</dbReference>
<dbReference type="SUPFAM" id="SSF56399">
    <property type="entry name" value="ADP-ribosylation"/>
    <property type="match status" value="1"/>
</dbReference>
<organism>
    <name type="scientific">Methanocaldococcus jannaschii (strain ATCC 43067 / DSM 2661 / JAL-1 / JCM 10045 / NBRC 100440)</name>
    <name type="common">Methanococcus jannaschii</name>
    <dbReference type="NCBI Taxonomy" id="243232"/>
    <lineage>
        <taxon>Archaea</taxon>
        <taxon>Methanobacteriati</taxon>
        <taxon>Methanobacteriota</taxon>
        <taxon>Methanomada group</taxon>
        <taxon>Methanococci</taxon>
        <taxon>Methanococcales</taxon>
        <taxon>Methanocaldococcaceae</taxon>
        <taxon>Methanocaldococcus</taxon>
    </lineage>
</organism>
<accession>Q57805</accession>
<gene>
    <name type="ordered locus">MJ0359</name>
</gene>
<proteinExistence type="predicted"/>
<reference key="1">
    <citation type="journal article" date="1996" name="Science">
        <title>Complete genome sequence of the methanogenic archaeon, Methanococcus jannaschii.</title>
        <authorList>
            <person name="Bult C.J."/>
            <person name="White O."/>
            <person name="Olsen G.J."/>
            <person name="Zhou L."/>
            <person name="Fleischmann R.D."/>
            <person name="Sutton G.G."/>
            <person name="Blake J.A."/>
            <person name="FitzGerald L.M."/>
            <person name="Clayton R.A."/>
            <person name="Gocayne J.D."/>
            <person name="Kerlavage A.R."/>
            <person name="Dougherty B.A."/>
            <person name="Tomb J.-F."/>
            <person name="Adams M.D."/>
            <person name="Reich C.I."/>
            <person name="Overbeek R."/>
            <person name="Kirkness E.F."/>
            <person name="Weinstock K.G."/>
            <person name="Merrick J.M."/>
            <person name="Glodek A."/>
            <person name="Scott J.L."/>
            <person name="Geoghagen N.S.M."/>
            <person name="Weidman J.F."/>
            <person name="Fuhrmann J.L."/>
            <person name="Nguyen D."/>
            <person name="Utterback T.R."/>
            <person name="Kelley J.M."/>
            <person name="Peterson J.D."/>
            <person name="Sadow P.W."/>
            <person name="Hanna M.C."/>
            <person name="Cotton M.D."/>
            <person name="Roberts K.M."/>
            <person name="Hurst M.A."/>
            <person name="Kaine B.P."/>
            <person name="Borodovsky M."/>
            <person name="Klenk H.-P."/>
            <person name="Fraser C.M."/>
            <person name="Smith H.O."/>
            <person name="Woese C.R."/>
            <person name="Venter J.C."/>
        </authorList>
    </citation>
    <scope>NUCLEOTIDE SEQUENCE [LARGE SCALE GENOMIC DNA]</scope>
    <source>
        <strain>ATCC 43067 / DSM 2661 / JAL-1 / JCM 10045 / NBRC 100440</strain>
    </source>
</reference>
<keyword id="KW-1185">Reference proteome</keyword>
<sequence>MMSYVRMTLYHGTDRKSAEKIMESKEILPSQGDNHWLGDGIYFYEEEFHAFKWIWYKEKNRNRLLKNFAIIKAEVICEESRIFDLTKIEHKLLFDMMYKLINTTKLRLDKLRGDMCAEGVVINYMFKNKELGYNKRFDIVRALFPIPVKKYQKIENREKNKKYKERTHRLTFMPEIQVCVKNPSVIKKLEWYDLEKTIDKFLIYTEIYKEDLGI</sequence>
<protein>
    <recommendedName>
        <fullName>Uncharacterized protein MJ0359</fullName>
    </recommendedName>
</protein>
<feature type="chain" id="PRO_0000106830" description="Uncharacterized protein MJ0359">
    <location>
        <begin position="1"/>
        <end position="214"/>
    </location>
</feature>